<evidence type="ECO:0000250" key="1">
    <source>
        <dbReference type="UniProtKB" id="P0AA37"/>
    </source>
</evidence>
<evidence type="ECO:0000250" key="2">
    <source>
        <dbReference type="UniProtKB" id="Q8IZ73"/>
    </source>
</evidence>
<evidence type="ECO:0000256" key="3">
    <source>
        <dbReference type="SAM" id="MobiDB-lite"/>
    </source>
</evidence>
<evidence type="ECO:0000305" key="4"/>
<evidence type="ECO:0000312" key="5">
    <source>
        <dbReference type="MGI" id="MGI:1918066"/>
    </source>
</evidence>
<evidence type="ECO:0007744" key="6">
    <source>
    </source>
</evidence>
<accession>Q149F1</accession>
<accession>Q8BXL2</accession>
<reference key="1">
    <citation type="journal article" date="2005" name="Science">
        <title>The transcriptional landscape of the mammalian genome.</title>
        <authorList>
            <person name="Carninci P."/>
            <person name="Kasukawa T."/>
            <person name="Katayama S."/>
            <person name="Gough J."/>
            <person name="Frith M.C."/>
            <person name="Maeda N."/>
            <person name="Oyama R."/>
            <person name="Ravasi T."/>
            <person name="Lenhard B."/>
            <person name="Wells C."/>
            <person name="Kodzius R."/>
            <person name="Shimokawa K."/>
            <person name="Bajic V.B."/>
            <person name="Brenner S.E."/>
            <person name="Batalov S."/>
            <person name="Forrest A.R."/>
            <person name="Zavolan M."/>
            <person name="Davis M.J."/>
            <person name="Wilming L.G."/>
            <person name="Aidinis V."/>
            <person name="Allen J.E."/>
            <person name="Ambesi-Impiombato A."/>
            <person name="Apweiler R."/>
            <person name="Aturaliya R.N."/>
            <person name="Bailey T.L."/>
            <person name="Bansal M."/>
            <person name="Baxter L."/>
            <person name="Beisel K.W."/>
            <person name="Bersano T."/>
            <person name="Bono H."/>
            <person name="Chalk A.M."/>
            <person name="Chiu K.P."/>
            <person name="Choudhary V."/>
            <person name="Christoffels A."/>
            <person name="Clutterbuck D.R."/>
            <person name="Crowe M.L."/>
            <person name="Dalla E."/>
            <person name="Dalrymple B.P."/>
            <person name="de Bono B."/>
            <person name="Della Gatta G."/>
            <person name="di Bernardo D."/>
            <person name="Down T."/>
            <person name="Engstrom P."/>
            <person name="Fagiolini M."/>
            <person name="Faulkner G."/>
            <person name="Fletcher C.F."/>
            <person name="Fukushima T."/>
            <person name="Furuno M."/>
            <person name="Futaki S."/>
            <person name="Gariboldi M."/>
            <person name="Georgii-Hemming P."/>
            <person name="Gingeras T.R."/>
            <person name="Gojobori T."/>
            <person name="Green R.E."/>
            <person name="Gustincich S."/>
            <person name="Harbers M."/>
            <person name="Hayashi Y."/>
            <person name="Hensch T.K."/>
            <person name="Hirokawa N."/>
            <person name="Hill D."/>
            <person name="Huminiecki L."/>
            <person name="Iacono M."/>
            <person name="Ikeo K."/>
            <person name="Iwama A."/>
            <person name="Ishikawa T."/>
            <person name="Jakt M."/>
            <person name="Kanapin A."/>
            <person name="Katoh M."/>
            <person name="Kawasawa Y."/>
            <person name="Kelso J."/>
            <person name="Kitamura H."/>
            <person name="Kitano H."/>
            <person name="Kollias G."/>
            <person name="Krishnan S.P."/>
            <person name="Kruger A."/>
            <person name="Kummerfeld S.K."/>
            <person name="Kurochkin I.V."/>
            <person name="Lareau L.F."/>
            <person name="Lazarevic D."/>
            <person name="Lipovich L."/>
            <person name="Liu J."/>
            <person name="Liuni S."/>
            <person name="McWilliam S."/>
            <person name="Madan Babu M."/>
            <person name="Madera M."/>
            <person name="Marchionni L."/>
            <person name="Matsuda H."/>
            <person name="Matsuzawa S."/>
            <person name="Miki H."/>
            <person name="Mignone F."/>
            <person name="Miyake S."/>
            <person name="Morris K."/>
            <person name="Mottagui-Tabar S."/>
            <person name="Mulder N."/>
            <person name="Nakano N."/>
            <person name="Nakauchi H."/>
            <person name="Ng P."/>
            <person name="Nilsson R."/>
            <person name="Nishiguchi S."/>
            <person name="Nishikawa S."/>
            <person name="Nori F."/>
            <person name="Ohara O."/>
            <person name="Okazaki Y."/>
            <person name="Orlando V."/>
            <person name="Pang K.C."/>
            <person name="Pavan W.J."/>
            <person name="Pavesi G."/>
            <person name="Pesole G."/>
            <person name="Petrovsky N."/>
            <person name="Piazza S."/>
            <person name="Reed J."/>
            <person name="Reid J.F."/>
            <person name="Ring B.Z."/>
            <person name="Ringwald M."/>
            <person name="Rost B."/>
            <person name="Ruan Y."/>
            <person name="Salzberg S.L."/>
            <person name="Sandelin A."/>
            <person name="Schneider C."/>
            <person name="Schoenbach C."/>
            <person name="Sekiguchi K."/>
            <person name="Semple C.A."/>
            <person name="Seno S."/>
            <person name="Sessa L."/>
            <person name="Sheng Y."/>
            <person name="Shibata Y."/>
            <person name="Shimada H."/>
            <person name="Shimada K."/>
            <person name="Silva D."/>
            <person name="Sinclair B."/>
            <person name="Sperling S."/>
            <person name="Stupka E."/>
            <person name="Sugiura K."/>
            <person name="Sultana R."/>
            <person name="Takenaka Y."/>
            <person name="Taki K."/>
            <person name="Tammoja K."/>
            <person name="Tan S.L."/>
            <person name="Tang S."/>
            <person name="Taylor M.S."/>
            <person name="Tegner J."/>
            <person name="Teichmann S.A."/>
            <person name="Ueda H.R."/>
            <person name="van Nimwegen E."/>
            <person name="Verardo R."/>
            <person name="Wei C.L."/>
            <person name="Yagi K."/>
            <person name="Yamanishi H."/>
            <person name="Zabarovsky E."/>
            <person name="Zhu S."/>
            <person name="Zimmer A."/>
            <person name="Hide W."/>
            <person name="Bult C."/>
            <person name="Grimmond S.M."/>
            <person name="Teasdale R.D."/>
            <person name="Liu E.T."/>
            <person name="Brusic V."/>
            <person name="Quackenbush J."/>
            <person name="Wahlestedt C."/>
            <person name="Mattick J.S."/>
            <person name="Hume D.A."/>
            <person name="Kai C."/>
            <person name="Sasaki D."/>
            <person name="Tomaru Y."/>
            <person name="Fukuda S."/>
            <person name="Kanamori-Katayama M."/>
            <person name="Suzuki M."/>
            <person name="Aoki J."/>
            <person name="Arakawa T."/>
            <person name="Iida J."/>
            <person name="Imamura K."/>
            <person name="Itoh M."/>
            <person name="Kato T."/>
            <person name="Kawaji H."/>
            <person name="Kawagashira N."/>
            <person name="Kawashima T."/>
            <person name="Kojima M."/>
            <person name="Kondo S."/>
            <person name="Konno H."/>
            <person name="Nakano K."/>
            <person name="Ninomiya N."/>
            <person name="Nishio T."/>
            <person name="Okada M."/>
            <person name="Plessy C."/>
            <person name="Shibata K."/>
            <person name="Shiraki T."/>
            <person name="Suzuki S."/>
            <person name="Tagami M."/>
            <person name="Waki K."/>
            <person name="Watahiki A."/>
            <person name="Okamura-Oho Y."/>
            <person name="Suzuki H."/>
            <person name="Kawai J."/>
            <person name="Hayashizaki Y."/>
        </authorList>
    </citation>
    <scope>NUCLEOTIDE SEQUENCE [LARGE SCALE MRNA]</scope>
    <source>
        <strain>C57BL/6J</strain>
        <tissue>Retina</tissue>
    </source>
</reference>
<reference key="2">
    <citation type="journal article" date="2009" name="PLoS Biol.">
        <title>Lineage-specific biology revealed by a finished genome assembly of the mouse.</title>
        <authorList>
            <person name="Church D.M."/>
            <person name="Goodstadt L."/>
            <person name="Hillier L.W."/>
            <person name="Zody M.C."/>
            <person name="Goldstein S."/>
            <person name="She X."/>
            <person name="Bult C.J."/>
            <person name="Agarwala R."/>
            <person name="Cherry J.L."/>
            <person name="DiCuccio M."/>
            <person name="Hlavina W."/>
            <person name="Kapustin Y."/>
            <person name="Meric P."/>
            <person name="Maglott D."/>
            <person name="Birtle Z."/>
            <person name="Marques A.C."/>
            <person name="Graves T."/>
            <person name="Zhou S."/>
            <person name="Teague B."/>
            <person name="Potamousis K."/>
            <person name="Churas C."/>
            <person name="Place M."/>
            <person name="Herschleb J."/>
            <person name="Runnheim R."/>
            <person name="Forrest D."/>
            <person name="Amos-Landgraf J."/>
            <person name="Schwartz D.C."/>
            <person name="Cheng Z."/>
            <person name="Lindblad-Toh K."/>
            <person name="Eichler E.E."/>
            <person name="Ponting C.P."/>
        </authorList>
    </citation>
    <scope>NUCLEOTIDE SEQUENCE [LARGE SCALE GENOMIC DNA]</scope>
    <source>
        <strain>C57BL/6J</strain>
    </source>
</reference>
<reference key="3">
    <citation type="journal article" date="2004" name="Genome Res.">
        <title>The status, quality, and expansion of the NIH full-length cDNA project: the Mammalian Gene Collection (MGC).</title>
        <authorList>
            <consortium name="The MGC Project Team"/>
        </authorList>
    </citation>
    <scope>NUCLEOTIDE SEQUENCE [LARGE SCALE MRNA]</scope>
</reference>
<reference key="4">
    <citation type="journal article" date="2010" name="Cell">
        <title>A tissue-specific atlas of mouse protein phosphorylation and expression.</title>
        <authorList>
            <person name="Huttlin E.L."/>
            <person name="Jedrychowski M.P."/>
            <person name="Elias J.E."/>
            <person name="Goswami T."/>
            <person name="Rad R."/>
            <person name="Beausoleil S.A."/>
            <person name="Villen J."/>
            <person name="Haas W."/>
            <person name="Sowa M.E."/>
            <person name="Gygi S.P."/>
        </authorList>
    </citation>
    <scope>PHOSPHORYLATION [LARGE SCALE ANALYSIS] AT THR-490</scope>
    <scope>IDENTIFICATION BY MASS SPECTROMETRY [LARGE SCALE ANALYSIS]</scope>
    <source>
        <tissue>Lung</tissue>
        <tissue>Spleen</tissue>
    </source>
</reference>
<gene>
    <name evidence="5" type="primary">Rpusd2</name>
</gene>
<name>RUSD2_MOUSE</name>
<proteinExistence type="evidence at protein level"/>
<protein>
    <recommendedName>
        <fullName evidence="4">Pseudouridylate synthase RPUSD2</fullName>
        <ecNumber evidence="2">5.4.99.-</ecNumber>
    </recommendedName>
    <alternativeName>
        <fullName evidence="4">RNA pseudouridylate synthase domain-containing protein 2</fullName>
    </alternativeName>
</protein>
<feature type="chain" id="PRO_0000300820" description="Pseudouridylate synthase RPUSD2">
    <location>
        <begin position="1"/>
        <end position="553"/>
    </location>
</feature>
<feature type="region of interest" description="Disordered" evidence="3">
    <location>
        <begin position="76"/>
        <end position="135"/>
    </location>
</feature>
<feature type="active site" evidence="1">
    <location>
        <position position="287"/>
    </location>
</feature>
<feature type="modified residue" description="Phosphothreonine" evidence="6">
    <location>
        <position position="490"/>
    </location>
</feature>
<feature type="sequence conflict" description="In Ref. 3; AAI17828/AAI17829." evidence="4" ref="3">
    <original>H</original>
    <variation>R</variation>
    <location>
        <position position="237"/>
    </location>
</feature>
<feature type="sequence conflict" description="In Ref. 3; AAI17828/AAI17829." evidence="4" ref="3">
    <original>V</original>
    <variation>M</variation>
    <location>
        <position position="360"/>
    </location>
</feature>
<comment type="function">
    <text evidence="2">Pseudouridine synthase that catalyzes pseudouridylation of mRNAs.</text>
</comment>
<comment type="catalytic activity">
    <reaction evidence="2">
        <text>a uridine in mRNA = a pseudouridine in mRNA</text>
        <dbReference type="Rhea" id="RHEA:56644"/>
        <dbReference type="Rhea" id="RHEA-COMP:14658"/>
        <dbReference type="Rhea" id="RHEA-COMP:14659"/>
        <dbReference type="ChEBI" id="CHEBI:65314"/>
        <dbReference type="ChEBI" id="CHEBI:65315"/>
    </reaction>
</comment>
<comment type="similarity">
    <text evidence="4">Belongs to the pseudouridine synthase RluA family.</text>
</comment>
<sequence length="553" mass="61535">MWRGVPGCLRDIVQWQVALWSHSFVRTWGSCGKAMTEALSAQAEAAGGLKALVQPNGDAGSNTSGEPLLERLEPAAVGKQVPESGDQAQGGEGQLPSNGEQTPAPVADSGKRKKRRGATGERVVPPPKKRRTGVSFSDEHFAETTYYFEGGLRKVRPYYFDFQTYCKGRWVGRSLLHVFSTEFRSQPLSYYEAAVRAGRLHLNEEPVQDLSIVLKDNDFLRNTVHRHEPPVTAEPIHLLAENNDVVVIDKPSSIPVHPCGRFRHNTVIFILGKEHQLKELHPLHRLDRLTSGVLMFAKTAAVSEKIHEQVRDRQLEKEYVCRVAGEFPDKEVICKEPILVVSYKVGVCRVDPRGKPCETVFQRLSYNGRSSVVQCRPLTGRTHQIRVHLQFLGHPILNDPIYNSTAWGPSRGQGGHIPKTDEELLRDLVAEHQAKESLSMLDLCESDLTPGLIDSTAPSSELAKDSLEGLATAAQKIDGIAEAAPQHLDTPEKAAKADVTQETDPLCAECRVLRQDPLPQDLVMFLHALRYKGPDFEYVSPIPAWARDDWQED</sequence>
<organism>
    <name type="scientific">Mus musculus</name>
    <name type="common">Mouse</name>
    <dbReference type="NCBI Taxonomy" id="10090"/>
    <lineage>
        <taxon>Eukaryota</taxon>
        <taxon>Metazoa</taxon>
        <taxon>Chordata</taxon>
        <taxon>Craniata</taxon>
        <taxon>Vertebrata</taxon>
        <taxon>Euteleostomi</taxon>
        <taxon>Mammalia</taxon>
        <taxon>Eutheria</taxon>
        <taxon>Euarchontoglires</taxon>
        <taxon>Glires</taxon>
        <taxon>Rodentia</taxon>
        <taxon>Myomorpha</taxon>
        <taxon>Muroidea</taxon>
        <taxon>Muridae</taxon>
        <taxon>Murinae</taxon>
        <taxon>Mus</taxon>
        <taxon>Mus</taxon>
    </lineage>
</organism>
<keyword id="KW-0413">Isomerase</keyword>
<keyword id="KW-0507">mRNA processing</keyword>
<keyword id="KW-0597">Phosphoprotein</keyword>
<keyword id="KW-1185">Reference proteome</keyword>
<dbReference type="EC" id="5.4.99.-" evidence="2"/>
<dbReference type="EMBL" id="AK044767">
    <property type="protein sequence ID" value="BAC32077.1"/>
    <property type="molecule type" value="mRNA"/>
</dbReference>
<dbReference type="EMBL" id="AL772264">
    <property type="status" value="NOT_ANNOTATED_CDS"/>
    <property type="molecule type" value="Genomic_DNA"/>
</dbReference>
<dbReference type="EMBL" id="BC117827">
    <property type="protein sequence ID" value="AAI17828.1"/>
    <property type="molecule type" value="mRNA"/>
</dbReference>
<dbReference type="EMBL" id="BC117828">
    <property type="protein sequence ID" value="AAI17829.1"/>
    <property type="molecule type" value="mRNA"/>
</dbReference>
<dbReference type="CCDS" id="CCDS16588.1"/>
<dbReference type="RefSeq" id="NP_775626.1">
    <property type="nucleotide sequence ID" value="NM_173450.3"/>
</dbReference>
<dbReference type="SMR" id="Q149F1"/>
<dbReference type="BioGRID" id="234852">
    <property type="interactions" value="7"/>
</dbReference>
<dbReference type="FunCoup" id="Q149F1">
    <property type="interactions" value="2232"/>
</dbReference>
<dbReference type="STRING" id="10090.ENSMUSP00000028796"/>
<dbReference type="iPTMnet" id="Q149F1"/>
<dbReference type="PhosphoSitePlus" id="Q149F1"/>
<dbReference type="jPOST" id="Q149F1"/>
<dbReference type="PaxDb" id="10090-ENSMUSP00000028796"/>
<dbReference type="PeptideAtlas" id="Q149F1"/>
<dbReference type="ProteomicsDB" id="256661"/>
<dbReference type="Pumba" id="Q149F1"/>
<dbReference type="Antibodypedia" id="10143">
    <property type="antibodies" value="146 antibodies from 20 providers"/>
</dbReference>
<dbReference type="DNASU" id="271842"/>
<dbReference type="Ensembl" id="ENSMUST00000028796.2">
    <property type="protein sequence ID" value="ENSMUSP00000028796.2"/>
    <property type="gene ID" value="ENSMUSG00000027324.2"/>
</dbReference>
<dbReference type="GeneID" id="271842"/>
<dbReference type="KEGG" id="mmu:271842"/>
<dbReference type="UCSC" id="uc008lsz.2">
    <property type="organism name" value="mouse"/>
</dbReference>
<dbReference type="AGR" id="MGI:1918066"/>
<dbReference type="CTD" id="27079"/>
<dbReference type="MGI" id="MGI:1918066">
    <property type="gene designation" value="Rpusd2"/>
</dbReference>
<dbReference type="VEuPathDB" id="HostDB:ENSMUSG00000027324"/>
<dbReference type="eggNOG" id="KOG1919">
    <property type="taxonomic scope" value="Eukaryota"/>
</dbReference>
<dbReference type="GeneTree" id="ENSGT00420000029802"/>
<dbReference type="HOGENOM" id="CLU_016902_12_5_1"/>
<dbReference type="InParanoid" id="Q149F1"/>
<dbReference type="OMA" id="QTYCKGR"/>
<dbReference type="OrthoDB" id="424794at2759"/>
<dbReference type="PhylomeDB" id="Q149F1"/>
<dbReference type="TreeFam" id="TF323255"/>
<dbReference type="BioGRID-ORCS" id="271842">
    <property type="hits" value="2 hits in 78 CRISPR screens"/>
</dbReference>
<dbReference type="PRO" id="PR:Q149F1"/>
<dbReference type="Proteomes" id="UP000000589">
    <property type="component" value="Chromosome 2"/>
</dbReference>
<dbReference type="RNAct" id="Q149F1">
    <property type="molecule type" value="protein"/>
</dbReference>
<dbReference type="Bgee" id="ENSMUSG00000027324">
    <property type="expression patterns" value="Expressed in lumbar dorsal root ganglion and 147 other cell types or tissues"/>
</dbReference>
<dbReference type="GO" id="GO:0009982">
    <property type="term" value="F:pseudouridine synthase activity"/>
    <property type="evidence" value="ECO:0007669"/>
    <property type="project" value="Ensembl"/>
</dbReference>
<dbReference type="GO" id="GO:0003723">
    <property type="term" value="F:RNA binding"/>
    <property type="evidence" value="ECO:0007669"/>
    <property type="project" value="InterPro"/>
</dbReference>
<dbReference type="GO" id="GO:0006397">
    <property type="term" value="P:mRNA processing"/>
    <property type="evidence" value="ECO:0007669"/>
    <property type="project" value="UniProtKB-KW"/>
</dbReference>
<dbReference type="GO" id="GO:1990481">
    <property type="term" value="P:mRNA pseudouridine synthesis"/>
    <property type="evidence" value="ECO:0007669"/>
    <property type="project" value="Ensembl"/>
</dbReference>
<dbReference type="CDD" id="cd02557">
    <property type="entry name" value="PseudoU_synth_ScRIB2"/>
    <property type="match status" value="1"/>
</dbReference>
<dbReference type="FunFam" id="3.30.2350.10:FF:000010">
    <property type="entry name" value="RNA pseudouridine synthase domain-containing 2"/>
    <property type="match status" value="1"/>
</dbReference>
<dbReference type="Gene3D" id="3.30.2350.10">
    <property type="entry name" value="Pseudouridine synthase"/>
    <property type="match status" value="1"/>
</dbReference>
<dbReference type="InterPro" id="IPR020103">
    <property type="entry name" value="PsdUridine_synth_cat_dom_sf"/>
</dbReference>
<dbReference type="InterPro" id="IPR006224">
    <property type="entry name" value="PsdUridine_synth_RluA-like_CS"/>
</dbReference>
<dbReference type="InterPro" id="IPR006225">
    <property type="entry name" value="PsdUridine_synth_RluC/D"/>
</dbReference>
<dbReference type="InterPro" id="IPR006145">
    <property type="entry name" value="PsdUridine_synth_RsuA/RluA"/>
</dbReference>
<dbReference type="InterPro" id="IPR050188">
    <property type="entry name" value="RluA_PseudoU_synthase"/>
</dbReference>
<dbReference type="NCBIfam" id="TIGR00005">
    <property type="entry name" value="rluA_subfam"/>
    <property type="match status" value="1"/>
</dbReference>
<dbReference type="PANTHER" id="PTHR21600">
    <property type="entry name" value="MITOCHONDRIAL RNA PSEUDOURIDINE SYNTHASE"/>
    <property type="match status" value="1"/>
</dbReference>
<dbReference type="PANTHER" id="PTHR21600:SF40">
    <property type="entry name" value="PSEUDOURIDYLATE SYNTHASE RPUSD2"/>
    <property type="match status" value="1"/>
</dbReference>
<dbReference type="Pfam" id="PF00849">
    <property type="entry name" value="PseudoU_synth_2"/>
    <property type="match status" value="1"/>
</dbReference>
<dbReference type="SUPFAM" id="SSF55120">
    <property type="entry name" value="Pseudouridine synthase"/>
    <property type="match status" value="1"/>
</dbReference>
<dbReference type="PROSITE" id="PS01129">
    <property type="entry name" value="PSI_RLU"/>
    <property type="match status" value="1"/>
</dbReference>